<comment type="subcellular location">
    <subcellularLocation>
        <location evidence="3">Secreted</location>
    </subcellularLocation>
</comment>
<comment type="similarity">
    <text evidence="3">Belongs to the CNF-like-inhibitor family.</text>
</comment>
<reference key="1">
    <citation type="journal article" date="2005" name="Science">
        <title>The transcriptional landscape of the mammalian genome.</title>
        <authorList>
            <person name="Carninci P."/>
            <person name="Kasukawa T."/>
            <person name="Katayama S."/>
            <person name="Gough J."/>
            <person name="Frith M.C."/>
            <person name="Maeda N."/>
            <person name="Oyama R."/>
            <person name="Ravasi T."/>
            <person name="Lenhard B."/>
            <person name="Wells C."/>
            <person name="Kodzius R."/>
            <person name="Shimokawa K."/>
            <person name="Bajic V.B."/>
            <person name="Brenner S.E."/>
            <person name="Batalov S."/>
            <person name="Forrest A.R."/>
            <person name="Zavolan M."/>
            <person name="Davis M.J."/>
            <person name="Wilming L.G."/>
            <person name="Aidinis V."/>
            <person name="Allen J.E."/>
            <person name="Ambesi-Impiombato A."/>
            <person name="Apweiler R."/>
            <person name="Aturaliya R.N."/>
            <person name="Bailey T.L."/>
            <person name="Bansal M."/>
            <person name="Baxter L."/>
            <person name="Beisel K.W."/>
            <person name="Bersano T."/>
            <person name="Bono H."/>
            <person name="Chalk A.M."/>
            <person name="Chiu K.P."/>
            <person name="Choudhary V."/>
            <person name="Christoffels A."/>
            <person name="Clutterbuck D.R."/>
            <person name="Crowe M.L."/>
            <person name="Dalla E."/>
            <person name="Dalrymple B.P."/>
            <person name="de Bono B."/>
            <person name="Della Gatta G."/>
            <person name="di Bernardo D."/>
            <person name="Down T."/>
            <person name="Engstrom P."/>
            <person name="Fagiolini M."/>
            <person name="Faulkner G."/>
            <person name="Fletcher C.F."/>
            <person name="Fukushima T."/>
            <person name="Furuno M."/>
            <person name="Futaki S."/>
            <person name="Gariboldi M."/>
            <person name="Georgii-Hemming P."/>
            <person name="Gingeras T.R."/>
            <person name="Gojobori T."/>
            <person name="Green R.E."/>
            <person name="Gustincich S."/>
            <person name="Harbers M."/>
            <person name="Hayashi Y."/>
            <person name="Hensch T.K."/>
            <person name="Hirokawa N."/>
            <person name="Hill D."/>
            <person name="Huminiecki L."/>
            <person name="Iacono M."/>
            <person name="Ikeo K."/>
            <person name="Iwama A."/>
            <person name="Ishikawa T."/>
            <person name="Jakt M."/>
            <person name="Kanapin A."/>
            <person name="Katoh M."/>
            <person name="Kawasawa Y."/>
            <person name="Kelso J."/>
            <person name="Kitamura H."/>
            <person name="Kitano H."/>
            <person name="Kollias G."/>
            <person name="Krishnan S.P."/>
            <person name="Kruger A."/>
            <person name="Kummerfeld S.K."/>
            <person name="Kurochkin I.V."/>
            <person name="Lareau L.F."/>
            <person name="Lazarevic D."/>
            <person name="Lipovich L."/>
            <person name="Liu J."/>
            <person name="Liuni S."/>
            <person name="McWilliam S."/>
            <person name="Madan Babu M."/>
            <person name="Madera M."/>
            <person name="Marchionni L."/>
            <person name="Matsuda H."/>
            <person name="Matsuzawa S."/>
            <person name="Miki H."/>
            <person name="Mignone F."/>
            <person name="Miyake S."/>
            <person name="Morris K."/>
            <person name="Mottagui-Tabar S."/>
            <person name="Mulder N."/>
            <person name="Nakano N."/>
            <person name="Nakauchi H."/>
            <person name="Ng P."/>
            <person name="Nilsson R."/>
            <person name="Nishiguchi S."/>
            <person name="Nishikawa S."/>
            <person name="Nori F."/>
            <person name="Ohara O."/>
            <person name="Okazaki Y."/>
            <person name="Orlando V."/>
            <person name="Pang K.C."/>
            <person name="Pavan W.J."/>
            <person name="Pavesi G."/>
            <person name="Pesole G."/>
            <person name="Petrovsky N."/>
            <person name="Piazza S."/>
            <person name="Reed J."/>
            <person name="Reid J.F."/>
            <person name="Ring B.Z."/>
            <person name="Ringwald M."/>
            <person name="Rost B."/>
            <person name="Ruan Y."/>
            <person name="Salzberg S.L."/>
            <person name="Sandelin A."/>
            <person name="Schneider C."/>
            <person name="Schoenbach C."/>
            <person name="Sekiguchi K."/>
            <person name="Semple C.A."/>
            <person name="Seno S."/>
            <person name="Sessa L."/>
            <person name="Sheng Y."/>
            <person name="Shibata Y."/>
            <person name="Shimada H."/>
            <person name="Shimada K."/>
            <person name="Silva D."/>
            <person name="Sinclair B."/>
            <person name="Sperling S."/>
            <person name="Stupka E."/>
            <person name="Sugiura K."/>
            <person name="Sultana R."/>
            <person name="Takenaka Y."/>
            <person name="Taki K."/>
            <person name="Tammoja K."/>
            <person name="Tan S.L."/>
            <person name="Tang S."/>
            <person name="Taylor M.S."/>
            <person name="Tegner J."/>
            <person name="Teichmann S.A."/>
            <person name="Ueda H.R."/>
            <person name="van Nimwegen E."/>
            <person name="Verardo R."/>
            <person name="Wei C.L."/>
            <person name="Yagi K."/>
            <person name="Yamanishi H."/>
            <person name="Zabarovsky E."/>
            <person name="Zhu S."/>
            <person name="Zimmer A."/>
            <person name="Hide W."/>
            <person name="Bult C."/>
            <person name="Grimmond S.M."/>
            <person name="Teasdale R.D."/>
            <person name="Liu E.T."/>
            <person name="Brusic V."/>
            <person name="Quackenbush J."/>
            <person name="Wahlestedt C."/>
            <person name="Mattick J.S."/>
            <person name="Hume D.A."/>
            <person name="Kai C."/>
            <person name="Sasaki D."/>
            <person name="Tomaru Y."/>
            <person name="Fukuda S."/>
            <person name="Kanamori-Katayama M."/>
            <person name="Suzuki M."/>
            <person name="Aoki J."/>
            <person name="Arakawa T."/>
            <person name="Iida J."/>
            <person name="Imamura K."/>
            <person name="Itoh M."/>
            <person name="Kato T."/>
            <person name="Kawaji H."/>
            <person name="Kawagashira N."/>
            <person name="Kawashima T."/>
            <person name="Kojima M."/>
            <person name="Kondo S."/>
            <person name="Konno H."/>
            <person name="Nakano K."/>
            <person name="Ninomiya N."/>
            <person name="Nishio T."/>
            <person name="Okada M."/>
            <person name="Plessy C."/>
            <person name="Shibata K."/>
            <person name="Shiraki T."/>
            <person name="Suzuki S."/>
            <person name="Tagami M."/>
            <person name="Waki K."/>
            <person name="Watahiki A."/>
            <person name="Okamura-Oho Y."/>
            <person name="Suzuki H."/>
            <person name="Kawai J."/>
            <person name="Hayashizaki Y."/>
        </authorList>
    </citation>
    <scope>NUCLEOTIDE SEQUENCE [LARGE SCALE MRNA]</scope>
    <source>
        <strain>C57BL/6J</strain>
        <tissue>Tongue</tissue>
    </source>
</reference>
<reference key="2">
    <citation type="journal article" date="2004" name="Genome Res.">
        <title>The status, quality, and expansion of the NIH full-length cDNA project: the Mammalian Gene Collection (MGC).</title>
        <authorList>
            <consortium name="The MGC Project Team"/>
        </authorList>
    </citation>
    <scope>NUCLEOTIDE SEQUENCE [LARGE SCALE MRNA]</scope>
    <source>
        <tissue>Testis</tissue>
    </source>
</reference>
<protein>
    <recommendedName>
        <fullName>phospholipase A2 inhibitor and Ly6/PLAUR domain-containing protein</fullName>
    </recommendedName>
</protein>
<evidence type="ECO:0000250" key="1"/>
<evidence type="ECO:0000255" key="2"/>
<evidence type="ECO:0000305" key="3"/>
<feature type="signal peptide" evidence="2">
    <location>
        <begin position="1"/>
        <end position="24"/>
    </location>
</feature>
<feature type="chain" id="PRO_0000332738" description="phospholipase A2 inhibitor and Ly6/PLAUR domain-containing protein">
    <location>
        <begin position="25"/>
        <end position="212"/>
    </location>
</feature>
<feature type="domain" description="UPAR/Ly6">
    <location>
        <begin position="27"/>
        <end position="117"/>
    </location>
</feature>
<feature type="disulfide bond" evidence="1">
    <location>
        <begin position="29"/>
        <end position="53"/>
    </location>
</feature>
<feature type="disulfide bond" evidence="1">
    <location>
        <begin position="32"/>
        <end position="39"/>
    </location>
</feature>
<feature type="disulfide bond" evidence="1">
    <location>
        <begin position="46"/>
        <end position="74"/>
    </location>
</feature>
<feature type="disulfide bond" evidence="1">
    <location>
        <begin position="80"/>
        <end position="101"/>
    </location>
</feature>
<feature type="disulfide bond" evidence="1">
    <location>
        <begin position="102"/>
        <end position="107"/>
    </location>
</feature>
<feature type="disulfide bond" evidence="1">
    <location>
        <begin position="126"/>
        <end position="152"/>
    </location>
</feature>
<feature type="disulfide bond" evidence="1">
    <location>
        <begin position="145"/>
        <end position="173"/>
    </location>
</feature>
<feature type="sequence conflict" description="In Ref. 1; BAB26587." evidence="3" ref="1">
    <original>R</original>
    <variation>K</variation>
    <location>
        <position position="5"/>
    </location>
</feature>
<gene>
    <name type="primary">Pinlyp</name>
</gene>
<sequence length="212" mass="22819">MILFRRHRTFLLAFTLLCTLLGLGCPLTCEVCKGSGHTCSGKMKTCEDGKDACVVLVSESSTKGRKSVNTFKACMKYKDCYSGFVSTTMTPSDYMVSNAHCCQSDGCNSGSVPPPLNNRTENGLMCPSCIAPFQETCPGTQAARCVGRETHCIYFAGNVQAGIIHTKFATRGCATESACHTKAGAEVPSAFYLYFLRRADCLPAPYPPGRGE</sequence>
<proteinExistence type="evidence at transcript level"/>
<keyword id="KW-1015">Disulfide bond</keyword>
<keyword id="KW-1185">Reference proteome</keyword>
<keyword id="KW-0964">Secreted</keyword>
<keyword id="KW-0732">Signal</keyword>
<accession>Q9CQD7</accession>
<accession>Q9D6V5</accession>
<organism>
    <name type="scientific">Mus musculus</name>
    <name type="common">Mouse</name>
    <dbReference type="NCBI Taxonomy" id="10090"/>
    <lineage>
        <taxon>Eukaryota</taxon>
        <taxon>Metazoa</taxon>
        <taxon>Chordata</taxon>
        <taxon>Craniata</taxon>
        <taxon>Vertebrata</taxon>
        <taxon>Euteleostomi</taxon>
        <taxon>Mammalia</taxon>
        <taxon>Eutheria</taxon>
        <taxon>Euarchontoglires</taxon>
        <taxon>Glires</taxon>
        <taxon>Rodentia</taxon>
        <taxon>Myomorpha</taxon>
        <taxon>Muroidea</taxon>
        <taxon>Muridae</taxon>
        <taxon>Murinae</taxon>
        <taxon>Mus</taxon>
        <taxon>Mus</taxon>
    </lineage>
</organism>
<dbReference type="EMBL" id="AK009589">
    <property type="protein sequence ID" value="BAB26378.1"/>
    <property type="molecule type" value="mRNA"/>
</dbReference>
<dbReference type="EMBL" id="AK009604">
    <property type="protein sequence ID" value="BAB26386.1"/>
    <property type="molecule type" value="mRNA"/>
</dbReference>
<dbReference type="EMBL" id="AK009778">
    <property type="protein sequence ID" value="BAB26498.1"/>
    <property type="molecule type" value="mRNA"/>
</dbReference>
<dbReference type="EMBL" id="AK009924">
    <property type="protein sequence ID" value="BAB26587.1"/>
    <property type="molecule type" value="mRNA"/>
</dbReference>
<dbReference type="EMBL" id="BC145686">
    <property type="protein sequence ID" value="AAI45687.1"/>
    <property type="molecule type" value="mRNA"/>
</dbReference>
<dbReference type="CCDS" id="CCDS20954.1"/>
<dbReference type="RefSeq" id="NP_001032220.1">
    <property type="nucleotide sequence ID" value="NM_001037143.3"/>
</dbReference>
<dbReference type="RefSeq" id="XP_006540337.1">
    <property type="nucleotide sequence ID" value="XM_006540274.5"/>
</dbReference>
<dbReference type="SMR" id="Q9CQD7"/>
<dbReference type="FunCoup" id="Q9CQD7">
    <property type="interactions" value="1"/>
</dbReference>
<dbReference type="STRING" id="10090.ENSMUSP00000011776"/>
<dbReference type="iPTMnet" id="Q9CQD7"/>
<dbReference type="PhosphoSitePlus" id="Q9CQD7"/>
<dbReference type="PaxDb" id="10090-ENSMUSP00000011776"/>
<dbReference type="ProteomicsDB" id="288166"/>
<dbReference type="Antibodypedia" id="70850">
    <property type="antibodies" value="4 antibodies from 4 providers"/>
</dbReference>
<dbReference type="Ensembl" id="ENSMUST00000011776.8">
    <property type="protein sequence ID" value="ENSMUSP00000011776.7"/>
    <property type="gene ID" value="ENSMUSG00000011632.8"/>
</dbReference>
<dbReference type="GeneID" id="641361"/>
<dbReference type="KEGG" id="mmu:641361"/>
<dbReference type="UCSC" id="uc009fpw.1">
    <property type="organism name" value="mouse"/>
</dbReference>
<dbReference type="AGR" id="MGI:3615324"/>
<dbReference type="CTD" id="390940"/>
<dbReference type="MGI" id="MGI:3615324">
    <property type="gene designation" value="Pinlyp"/>
</dbReference>
<dbReference type="VEuPathDB" id="HostDB:ENSMUSG00000011632"/>
<dbReference type="eggNOG" id="ENOG502SRI1">
    <property type="taxonomic scope" value="Eukaryota"/>
</dbReference>
<dbReference type="GeneTree" id="ENSGT00730000111229"/>
<dbReference type="HOGENOM" id="CLU_094248_0_0_1"/>
<dbReference type="InParanoid" id="Q9CQD7"/>
<dbReference type="OMA" id="ESACYAK"/>
<dbReference type="OrthoDB" id="9907178at2759"/>
<dbReference type="PhylomeDB" id="Q9CQD7"/>
<dbReference type="TreeFam" id="TF352648"/>
<dbReference type="BioGRID-ORCS" id="641361">
    <property type="hits" value="4 hits in 75 CRISPR screens"/>
</dbReference>
<dbReference type="ChiTaRS" id="Pinlyp">
    <property type="organism name" value="mouse"/>
</dbReference>
<dbReference type="PRO" id="PR:Q9CQD7"/>
<dbReference type="Proteomes" id="UP000000589">
    <property type="component" value="Chromosome 7"/>
</dbReference>
<dbReference type="RNAct" id="Q9CQD7">
    <property type="molecule type" value="protein"/>
</dbReference>
<dbReference type="Bgee" id="ENSMUSG00000011632">
    <property type="expression patterns" value="Expressed in lip and 29 other cell types or tissues"/>
</dbReference>
<dbReference type="ExpressionAtlas" id="Q9CQD7">
    <property type="expression patterns" value="baseline and differential"/>
</dbReference>
<dbReference type="GO" id="GO:0005576">
    <property type="term" value="C:extracellular region"/>
    <property type="evidence" value="ECO:0007669"/>
    <property type="project" value="UniProtKB-SubCell"/>
</dbReference>
<dbReference type="GO" id="GO:0004859">
    <property type="term" value="F:phospholipase inhibitor activity"/>
    <property type="evidence" value="ECO:0007669"/>
    <property type="project" value="InterPro"/>
</dbReference>
<dbReference type="CDD" id="cd23571">
    <property type="entry name" value="TFP_LU_ECD_PINLYP_rpt1"/>
    <property type="match status" value="1"/>
</dbReference>
<dbReference type="CDD" id="cd23572">
    <property type="entry name" value="TFP_LU_ECD_PINLYP_rpt2"/>
    <property type="match status" value="1"/>
</dbReference>
<dbReference type="Gene3D" id="2.10.60.10">
    <property type="entry name" value="CD59"/>
    <property type="match status" value="2"/>
</dbReference>
<dbReference type="InterPro" id="IPR050918">
    <property type="entry name" value="CNF-like_PLA2_Inhibitor"/>
</dbReference>
<dbReference type="InterPro" id="IPR016054">
    <property type="entry name" value="LY6_UPA_recep-like"/>
</dbReference>
<dbReference type="InterPro" id="IPR004126">
    <property type="entry name" value="PLipase_A2_inh_N"/>
</dbReference>
<dbReference type="InterPro" id="IPR045860">
    <property type="entry name" value="Snake_toxin-like_sf"/>
</dbReference>
<dbReference type="PANTHER" id="PTHR20914">
    <property type="entry name" value="LY6/PLAUR DOMAIN-CONTAINING PROTEIN 8"/>
    <property type="match status" value="1"/>
</dbReference>
<dbReference type="PANTHER" id="PTHR20914:SF25">
    <property type="entry name" value="PHOSPHOLIPASE A2 INHIBITOR AND LY6_PLAUR DOMAIN-CONTAINING PROTEIN"/>
    <property type="match status" value="1"/>
</dbReference>
<dbReference type="Pfam" id="PF02988">
    <property type="entry name" value="PLA2_inh"/>
    <property type="match status" value="1"/>
</dbReference>
<dbReference type="Pfam" id="PF00021">
    <property type="entry name" value="UPAR_LY6"/>
    <property type="match status" value="1"/>
</dbReference>
<dbReference type="SUPFAM" id="SSF57302">
    <property type="entry name" value="Snake toxin-like"/>
    <property type="match status" value="2"/>
</dbReference>
<name>PINLY_MOUSE</name>